<keyword id="KW-0028">Amino-acid biosynthesis</keyword>
<keyword id="KW-0100">Branched-chain amino acid biosynthesis</keyword>
<keyword id="KW-0963">Cytoplasm</keyword>
<keyword id="KW-0432">Leucine biosynthesis</keyword>
<keyword id="KW-0460">Magnesium</keyword>
<keyword id="KW-0464">Manganese</keyword>
<keyword id="KW-0479">Metal-binding</keyword>
<keyword id="KW-0520">NAD</keyword>
<keyword id="KW-0560">Oxidoreductase</keyword>
<comment type="function">
    <text>Catalyzes the oxidation of 3-carboxy-2-hydroxy-4-methylpentanoate (3-isopropylmalate) to 3-carboxy-4-methyl-2-oxopentanoate. The product decarboxylates to 4-methyl-2 oxopentanoate.</text>
</comment>
<comment type="catalytic activity">
    <reaction>
        <text>(2R,3S)-3-isopropylmalate + NAD(+) = 4-methyl-2-oxopentanoate + CO2 + NADH</text>
        <dbReference type="Rhea" id="RHEA:32271"/>
        <dbReference type="ChEBI" id="CHEBI:16526"/>
        <dbReference type="ChEBI" id="CHEBI:17865"/>
        <dbReference type="ChEBI" id="CHEBI:35121"/>
        <dbReference type="ChEBI" id="CHEBI:57540"/>
        <dbReference type="ChEBI" id="CHEBI:57945"/>
        <dbReference type="EC" id="1.1.1.85"/>
    </reaction>
</comment>
<comment type="cofactor">
    <cofactor evidence="1">
        <name>Mg(2+)</name>
        <dbReference type="ChEBI" id="CHEBI:18420"/>
    </cofactor>
    <cofactor evidence="1">
        <name>Mn(2+)</name>
        <dbReference type="ChEBI" id="CHEBI:29035"/>
    </cofactor>
    <text evidence="1">Binds 1 Mg(2+) or Mn(2+) ion per subunit.</text>
</comment>
<comment type="pathway">
    <text>Amino-acid biosynthesis; L-leucine biosynthesis; L-leucine from 3-methyl-2-oxobutanoate: step 3/4.</text>
</comment>
<comment type="subunit">
    <text evidence="1">Homodimer.</text>
</comment>
<comment type="subcellular location">
    <subcellularLocation>
        <location>Cytoplasm</location>
    </subcellularLocation>
</comment>
<comment type="similarity">
    <text evidence="2">Belongs to the isocitrate and isopropylmalate dehydrogenases family.</text>
</comment>
<evidence type="ECO:0000250" key="1"/>
<evidence type="ECO:0000305" key="2"/>
<feature type="chain" id="PRO_0000083601" description="3-isopropylmalate dehydrogenase">
    <location>
        <begin position="1"/>
        <end position="373"/>
    </location>
</feature>
<feature type="binding site" evidence="1">
    <location>
        <begin position="82"/>
        <end position="93"/>
    </location>
    <ligand>
        <name>NAD(+)</name>
        <dbReference type="ChEBI" id="CHEBI:57540"/>
    </ligand>
</feature>
<feature type="binding site" evidence="1">
    <location>
        <position position="100"/>
    </location>
    <ligand>
        <name>substrate</name>
    </ligand>
</feature>
<feature type="binding site" evidence="1">
    <location>
        <position position="110"/>
    </location>
    <ligand>
        <name>substrate</name>
    </ligand>
</feature>
<feature type="binding site" evidence="1">
    <location>
        <position position="139"/>
    </location>
    <ligand>
        <name>substrate</name>
    </ligand>
</feature>
<feature type="binding site" evidence="1">
    <location>
        <position position="231"/>
    </location>
    <ligand>
        <name>Mg(2+)</name>
        <dbReference type="ChEBI" id="CHEBI:18420"/>
    </ligand>
</feature>
<feature type="binding site" evidence="1">
    <location>
        <position position="231"/>
    </location>
    <ligand>
        <name>substrate</name>
    </ligand>
</feature>
<feature type="binding site" evidence="1">
    <location>
        <position position="256"/>
    </location>
    <ligand>
        <name>Mg(2+)</name>
        <dbReference type="ChEBI" id="CHEBI:18420"/>
    </ligand>
</feature>
<feature type="binding site" evidence="1">
    <location>
        <position position="260"/>
    </location>
    <ligand>
        <name>Mg(2+)</name>
        <dbReference type="ChEBI" id="CHEBI:18420"/>
    </ligand>
</feature>
<feature type="binding site" evidence="1">
    <location>
        <begin position="295"/>
        <end position="306"/>
    </location>
    <ligand>
        <name>NAD(+)</name>
        <dbReference type="ChEBI" id="CHEBI:57540"/>
    </ligand>
</feature>
<feature type="site" description="Important for catalysis" evidence="1">
    <location>
        <position position="146"/>
    </location>
</feature>
<feature type="site" description="Important for catalysis" evidence="1">
    <location>
        <position position="198"/>
    </location>
</feature>
<gene>
    <name type="primary">LEU2</name>
</gene>
<reference key="1">
    <citation type="submission" date="1997-05" db="EMBL/GenBank/DDBJ databases">
        <title>Disruption of the LEU2 gene of Candida albicans.</title>
        <authorList>
            <person name="Plant E.P."/>
        </authorList>
    </citation>
    <scope>NUCLEOTIDE SEQUENCE [GENOMIC DNA]</scope>
</reference>
<organism>
    <name type="scientific">Candida albicans</name>
    <name type="common">Yeast</name>
    <dbReference type="NCBI Taxonomy" id="5476"/>
    <lineage>
        <taxon>Eukaryota</taxon>
        <taxon>Fungi</taxon>
        <taxon>Dikarya</taxon>
        <taxon>Ascomycota</taxon>
        <taxon>Saccharomycotina</taxon>
        <taxon>Pichiomycetes</taxon>
        <taxon>Debaryomycetaceae</taxon>
        <taxon>Candida/Lodderomyces clade</taxon>
        <taxon>Candida</taxon>
    </lineage>
</organism>
<proteinExistence type="inferred from homology"/>
<dbReference type="EC" id="1.1.1.85"/>
<dbReference type="EMBL" id="AF000121">
    <property type="protein sequence ID" value="AAB58312.1"/>
    <property type="molecule type" value="Genomic_DNA"/>
</dbReference>
<dbReference type="SMR" id="P87186"/>
<dbReference type="VEuPathDB" id="FungiDB:C7_00400W_A"/>
<dbReference type="VEuPathDB" id="FungiDB:CAWG_05397"/>
<dbReference type="UniPathway" id="UPA00048">
    <property type="reaction ID" value="UER00072"/>
</dbReference>
<dbReference type="GO" id="GO:0005829">
    <property type="term" value="C:cytosol"/>
    <property type="evidence" value="ECO:0007669"/>
    <property type="project" value="EnsemblFungi"/>
</dbReference>
<dbReference type="GO" id="GO:0003862">
    <property type="term" value="F:3-isopropylmalate dehydrogenase activity"/>
    <property type="evidence" value="ECO:0007669"/>
    <property type="project" value="UniProtKB-EC"/>
</dbReference>
<dbReference type="GO" id="GO:0000287">
    <property type="term" value="F:magnesium ion binding"/>
    <property type="evidence" value="ECO:0007669"/>
    <property type="project" value="InterPro"/>
</dbReference>
<dbReference type="GO" id="GO:0051287">
    <property type="term" value="F:NAD binding"/>
    <property type="evidence" value="ECO:0007669"/>
    <property type="project" value="InterPro"/>
</dbReference>
<dbReference type="GO" id="GO:0009098">
    <property type="term" value="P:L-leucine biosynthetic process"/>
    <property type="evidence" value="ECO:0007669"/>
    <property type="project" value="UniProtKB-UniPathway"/>
</dbReference>
<dbReference type="FunFam" id="3.40.718.10:FF:000006">
    <property type="entry name" value="3-isopropylmalate dehydrogenase"/>
    <property type="match status" value="1"/>
</dbReference>
<dbReference type="Gene3D" id="3.40.718.10">
    <property type="entry name" value="Isopropylmalate Dehydrogenase"/>
    <property type="match status" value="1"/>
</dbReference>
<dbReference type="InterPro" id="IPR019818">
    <property type="entry name" value="IsoCit/isopropylmalate_DH_CS"/>
</dbReference>
<dbReference type="InterPro" id="IPR024084">
    <property type="entry name" value="IsoPropMal-DH-like_dom"/>
</dbReference>
<dbReference type="InterPro" id="IPR004429">
    <property type="entry name" value="Isopropylmalate_DH"/>
</dbReference>
<dbReference type="NCBIfam" id="TIGR00169">
    <property type="entry name" value="leuB"/>
    <property type="match status" value="1"/>
</dbReference>
<dbReference type="PANTHER" id="PTHR42979">
    <property type="entry name" value="3-ISOPROPYLMALATE DEHYDROGENASE"/>
    <property type="match status" value="1"/>
</dbReference>
<dbReference type="PANTHER" id="PTHR42979:SF1">
    <property type="entry name" value="3-ISOPROPYLMALATE DEHYDROGENASE"/>
    <property type="match status" value="1"/>
</dbReference>
<dbReference type="Pfam" id="PF00180">
    <property type="entry name" value="Iso_dh"/>
    <property type="match status" value="1"/>
</dbReference>
<dbReference type="SMART" id="SM01329">
    <property type="entry name" value="Iso_dh"/>
    <property type="match status" value="1"/>
</dbReference>
<dbReference type="SUPFAM" id="SSF53659">
    <property type="entry name" value="Isocitrate/Isopropylmalate dehydrogenase-like"/>
    <property type="match status" value="1"/>
</dbReference>
<dbReference type="PROSITE" id="PS00470">
    <property type="entry name" value="IDH_IMDH"/>
    <property type="match status" value="1"/>
</dbReference>
<name>LEU3_CANAX</name>
<accession>P87186</accession>
<sequence>MSVKTQTITVLPGDHVGTEIVNEPTKVLKAIEAPTPYQKIQFDFKHHLIGGAAIDATGVPLPDDALESAKSSDAVLLGAVGGPKWGTGTVRPEQGLLKIRKELNLYANIRPCNFASDSLLELSPLKAEVVKGTNLIIVRELVGGIYFGERQEQEESEDHQTAWYRPKYTVDEVTRITRMAAFMALQHNPPLPIWSLDKANVLASSRLWRKTVDKVISEEFPALSVQHQLIDSAAMILIQNPTKLSGIIITSNMFGDIISDEASVIPGSLGLLPSASLASLPDTNTAFGLYEPCHGSAPDLPANKVNPIATILSAASMLRLALDCVKETEALEEAVKQVLDSGIRTADLRGTSSTTEVGDAIAETVTKILKQNT</sequence>
<protein>
    <recommendedName>
        <fullName>3-isopropylmalate dehydrogenase</fullName>
        <shortName>3-IPM-DH</shortName>
        <shortName>IMDH</shortName>
        <ecNumber>1.1.1.85</ecNumber>
    </recommendedName>
    <alternativeName>
        <fullName>Beta-IPM dehydrogenase</fullName>
    </alternativeName>
</protein>